<evidence type="ECO:0000255" key="1">
    <source>
        <dbReference type="HAMAP-Rule" id="MF_00295"/>
    </source>
</evidence>
<protein>
    <recommendedName>
        <fullName evidence="1">Homoserine O-succinyltransferase</fullName>
        <shortName evidence="1">HST</shortName>
        <ecNumber evidence="1">2.3.1.46</ecNumber>
    </recommendedName>
    <alternativeName>
        <fullName evidence="1">Homoserine transsuccinylase</fullName>
        <shortName evidence="1">HTS</shortName>
    </alternativeName>
</protein>
<keyword id="KW-0012">Acyltransferase</keyword>
<keyword id="KW-0028">Amino-acid biosynthesis</keyword>
<keyword id="KW-0963">Cytoplasm</keyword>
<keyword id="KW-0486">Methionine biosynthesis</keyword>
<keyword id="KW-1185">Reference proteome</keyword>
<keyword id="KW-0808">Transferase</keyword>
<proteinExistence type="inferred from homology"/>
<accession>Q084X6</accession>
<comment type="function">
    <text evidence="1">Transfers a succinyl group from succinyl-CoA to L-homoserine, forming succinyl-L-homoserine.</text>
</comment>
<comment type="catalytic activity">
    <reaction evidence="1">
        <text>L-homoserine + succinyl-CoA = O-succinyl-L-homoserine + CoA</text>
        <dbReference type="Rhea" id="RHEA:22008"/>
        <dbReference type="ChEBI" id="CHEBI:57287"/>
        <dbReference type="ChEBI" id="CHEBI:57292"/>
        <dbReference type="ChEBI" id="CHEBI:57476"/>
        <dbReference type="ChEBI" id="CHEBI:57661"/>
        <dbReference type="EC" id="2.3.1.46"/>
    </reaction>
</comment>
<comment type="pathway">
    <text evidence="1">Amino-acid biosynthesis; L-methionine biosynthesis via de novo pathway; O-succinyl-L-homoserine from L-homoserine: step 1/1.</text>
</comment>
<comment type="subcellular location">
    <subcellularLocation>
        <location evidence="1">Cytoplasm</location>
    </subcellularLocation>
</comment>
<comment type="similarity">
    <text evidence="1">Belongs to the MetA family.</text>
</comment>
<dbReference type="EC" id="2.3.1.46" evidence="1"/>
<dbReference type="EMBL" id="CP000447">
    <property type="protein sequence ID" value="ABI71189.1"/>
    <property type="molecule type" value="Genomic_DNA"/>
</dbReference>
<dbReference type="SMR" id="Q084X6"/>
<dbReference type="STRING" id="318167.Sfri_1336"/>
<dbReference type="KEGG" id="sfr:Sfri_1336"/>
<dbReference type="eggNOG" id="COG1897">
    <property type="taxonomic scope" value="Bacteria"/>
</dbReference>
<dbReference type="HOGENOM" id="CLU_057851_0_1_6"/>
<dbReference type="OrthoDB" id="9772423at2"/>
<dbReference type="UniPathway" id="UPA00051">
    <property type="reaction ID" value="UER00075"/>
</dbReference>
<dbReference type="Proteomes" id="UP000000684">
    <property type="component" value="Chromosome"/>
</dbReference>
<dbReference type="GO" id="GO:0005737">
    <property type="term" value="C:cytoplasm"/>
    <property type="evidence" value="ECO:0007669"/>
    <property type="project" value="UniProtKB-SubCell"/>
</dbReference>
<dbReference type="GO" id="GO:0004414">
    <property type="term" value="F:homoserine O-acetyltransferase activity"/>
    <property type="evidence" value="ECO:0007669"/>
    <property type="project" value="UniProtKB-UniRule"/>
</dbReference>
<dbReference type="GO" id="GO:0008899">
    <property type="term" value="F:homoserine O-succinyltransferase activity"/>
    <property type="evidence" value="ECO:0007669"/>
    <property type="project" value="UniProtKB-EC"/>
</dbReference>
<dbReference type="GO" id="GO:0019281">
    <property type="term" value="P:L-methionine biosynthetic process from homoserine via O-succinyl-L-homoserine and cystathionine"/>
    <property type="evidence" value="ECO:0007669"/>
    <property type="project" value="InterPro"/>
</dbReference>
<dbReference type="CDD" id="cd03131">
    <property type="entry name" value="GATase1_HTS"/>
    <property type="match status" value="1"/>
</dbReference>
<dbReference type="FunFam" id="3.40.50.880:FF:000004">
    <property type="entry name" value="Homoserine O-succinyltransferase"/>
    <property type="match status" value="1"/>
</dbReference>
<dbReference type="Gene3D" id="3.40.50.880">
    <property type="match status" value="1"/>
</dbReference>
<dbReference type="HAMAP" id="MF_00295">
    <property type="entry name" value="MetA_acyltransf"/>
    <property type="match status" value="1"/>
</dbReference>
<dbReference type="InterPro" id="IPR029062">
    <property type="entry name" value="Class_I_gatase-like"/>
</dbReference>
<dbReference type="InterPro" id="IPR005697">
    <property type="entry name" value="HST_MetA"/>
</dbReference>
<dbReference type="InterPro" id="IPR033752">
    <property type="entry name" value="MetA_family"/>
</dbReference>
<dbReference type="NCBIfam" id="TIGR01001">
    <property type="entry name" value="metA"/>
    <property type="match status" value="1"/>
</dbReference>
<dbReference type="PANTHER" id="PTHR20919">
    <property type="entry name" value="HOMOSERINE O-SUCCINYLTRANSFERASE"/>
    <property type="match status" value="1"/>
</dbReference>
<dbReference type="PANTHER" id="PTHR20919:SF0">
    <property type="entry name" value="HOMOSERINE O-SUCCINYLTRANSFERASE"/>
    <property type="match status" value="1"/>
</dbReference>
<dbReference type="Pfam" id="PF04204">
    <property type="entry name" value="HTS"/>
    <property type="match status" value="1"/>
</dbReference>
<dbReference type="PIRSF" id="PIRSF000450">
    <property type="entry name" value="H_ser_succinyltr"/>
    <property type="match status" value="1"/>
</dbReference>
<dbReference type="SUPFAM" id="SSF52317">
    <property type="entry name" value="Class I glutamine amidotransferase-like"/>
    <property type="match status" value="1"/>
</dbReference>
<sequence length="314" mass="36606">MPVRIPDNLPAAGILESENIFVMSETRAANQDIRPMRVLILNLMPNKIETETQLLRLLGNTPLQVGVDLLRIHDKESKHTSVDHMNTFYRDFEDIRNNNYDGLIITGAPLGQIDFKDVVYWDHIREIIDWSQQHVTSVLFLCWAAHAGLYHLYDLHRQLLANKRSGVFNHRRTSDPHPLLRGFDDEFFAPHSRFAEMDIEQIRQHPDLEVLAESDEAGAYIVLSRDNHNVFVMGHPEYQKDTLNEEYVRDVGEGLNPDIPQNYYRQDDPTQDTIVRWHSHGSLLVSNWLNYYVYQLTPYDLSDMNAKTPWESKK</sequence>
<name>METAS_SHEFN</name>
<organism>
    <name type="scientific">Shewanella frigidimarina (strain NCIMB 400)</name>
    <dbReference type="NCBI Taxonomy" id="318167"/>
    <lineage>
        <taxon>Bacteria</taxon>
        <taxon>Pseudomonadati</taxon>
        <taxon>Pseudomonadota</taxon>
        <taxon>Gammaproteobacteria</taxon>
        <taxon>Alteromonadales</taxon>
        <taxon>Shewanellaceae</taxon>
        <taxon>Shewanella</taxon>
    </lineage>
</organism>
<reference key="1">
    <citation type="submission" date="2006-08" db="EMBL/GenBank/DDBJ databases">
        <title>Complete sequence of Shewanella frigidimarina NCIMB 400.</title>
        <authorList>
            <consortium name="US DOE Joint Genome Institute"/>
            <person name="Copeland A."/>
            <person name="Lucas S."/>
            <person name="Lapidus A."/>
            <person name="Barry K."/>
            <person name="Detter J.C."/>
            <person name="Glavina del Rio T."/>
            <person name="Hammon N."/>
            <person name="Israni S."/>
            <person name="Dalin E."/>
            <person name="Tice H."/>
            <person name="Pitluck S."/>
            <person name="Fredrickson J.K."/>
            <person name="Kolker E."/>
            <person name="McCuel L.A."/>
            <person name="DiChristina T."/>
            <person name="Nealson K.H."/>
            <person name="Newman D."/>
            <person name="Tiedje J.M."/>
            <person name="Zhou J."/>
            <person name="Romine M.F."/>
            <person name="Culley D.E."/>
            <person name="Serres M."/>
            <person name="Chertkov O."/>
            <person name="Brettin T."/>
            <person name="Bruce D."/>
            <person name="Han C."/>
            <person name="Tapia R."/>
            <person name="Gilna P."/>
            <person name="Schmutz J."/>
            <person name="Larimer F."/>
            <person name="Land M."/>
            <person name="Hauser L."/>
            <person name="Kyrpides N."/>
            <person name="Mikhailova N."/>
            <person name="Richardson P."/>
        </authorList>
    </citation>
    <scope>NUCLEOTIDE SEQUENCE [LARGE SCALE GENOMIC DNA]</scope>
    <source>
        <strain>NCIMB 400</strain>
    </source>
</reference>
<feature type="chain" id="PRO_1000021836" description="Homoserine O-succinyltransferase">
    <location>
        <begin position="1"/>
        <end position="314"/>
    </location>
</feature>
<feature type="active site" description="Acyl-thioester intermediate" evidence="1">
    <location>
        <position position="142"/>
    </location>
</feature>
<feature type="active site" description="Proton acceptor" evidence="1">
    <location>
        <position position="235"/>
    </location>
</feature>
<feature type="active site" evidence="1">
    <location>
        <position position="237"/>
    </location>
</feature>
<feature type="binding site" evidence="1">
    <location>
        <position position="163"/>
    </location>
    <ligand>
        <name>substrate</name>
    </ligand>
</feature>
<feature type="binding site" evidence="1">
    <location>
        <position position="192"/>
    </location>
    <ligand>
        <name>substrate</name>
    </ligand>
</feature>
<feature type="binding site" evidence="1">
    <location>
        <position position="249"/>
    </location>
    <ligand>
        <name>substrate</name>
    </ligand>
</feature>
<feature type="site" description="Important for acyl-CoA specificity" evidence="1">
    <location>
        <position position="111"/>
    </location>
</feature>
<feature type="site" description="Important for substrate specificity" evidence="1">
    <location>
        <position position="192"/>
    </location>
</feature>
<gene>
    <name evidence="1" type="primary">metAS</name>
    <name type="ordered locus">Sfri_1336</name>
</gene>